<protein>
    <recommendedName>
        <fullName evidence="1">6,7-dimethyl-8-ribityllumazine synthase</fullName>
        <shortName evidence="1">DMRL synthase</shortName>
        <shortName evidence="1">LS</shortName>
        <shortName evidence="1">Lumazine synthase</shortName>
        <ecNumber evidence="1">2.5.1.78</ecNumber>
    </recommendedName>
</protein>
<dbReference type="EC" id="2.5.1.78" evidence="1"/>
<dbReference type="EMBL" id="AE014184">
    <property type="protein sequence ID" value="AAO44788.1"/>
    <property type="molecule type" value="Genomic_DNA"/>
</dbReference>
<dbReference type="RefSeq" id="WP_011096647.1">
    <property type="nucleotide sequence ID" value="NC_004572.3"/>
</dbReference>
<dbReference type="SMR" id="Q83FM6"/>
<dbReference type="STRING" id="203267.TWT_691"/>
<dbReference type="GeneID" id="67388485"/>
<dbReference type="KEGG" id="twh:TWT_691"/>
<dbReference type="eggNOG" id="COG0054">
    <property type="taxonomic scope" value="Bacteria"/>
</dbReference>
<dbReference type="HOGENOM" id="CLU_089358_1_1_11"/>
<dbReference type="OrthoDB" id="9809709at2"/>
<dbReference type="UniPathway" id="UPA00275">
    <property type="reaction ID" value="UER00404"/>
</dbReference>
<dbReference type="Proteomes" id="UP000002200">
    <property type="component" value="Chromosome"/>
</dbReference>
<dbReference type="GO" id="GO:0005829">
    <property type="term" value="C:cytosol"/>
    <property type="evidence" value="ECO:0007669"/>
    <property type="project" value="TreeGrafter"/>
</dbReference>
<dbReference type="GO" id="GO:0009349">
    <property type="term" value="C:riboflavin synthase complex"/>
    <property type="evidence" value="ECO:0007669"/>
    <property type="project" value="InterPro"/>
</dbReference>
<dbReference type="GO" id="GO:0000906">
    <property type="term" value="F:6,7-dimethyl-8-ribityllumazine synthase activity"/>
    <property type="evidence" value="ECO:0007669"/>
    <property type="project" value="UniProtKB-UniRule"/>
</dbReference>
<dbReference type="GO" id="GO:0009231">
    <property type="term" value="P:riboflavin biosynthetic process"/>
    <property type="evidence" value="ECO:0007669"/>
    <property type="project" value="UniProtKB-UniRule"/>
</dbReference>
<dbReference type="CDD" id="cd09209">
    <property type="entry name" value="Lumazine_synthase-I"/>
    <property type="match status" value="1"/>
</dbReference>
<dbReference type="Gene3D" id="3.40.50.960">
    <property type="entry name" value="Lumazine/riboflavin synthase"/>
    <property type="match status" value="1"/>
</dbReference>
<dbReference type="HAMAP" id="MF_00178">
    <property type="entry name" value="Lumazine_synth"/>
    <property type="match status" value="1"/>
</dbReference>
<dbReference type="InterPro" id="IPR034964">
    <property type="entry name" value="LS"/>
</dbReference>
<dbReference type="InterPro" id="IPR002180">
    <property type="entry name" value="LS/RS"/>
</dbReference>
<dbReference type="InterPro" id="IPR036467">
    <property type="entry name" value="LS/RS_sf"/>
</dbReference>
<dbReference type="NCBIfam" id="TIGR00114">
    <property type="entry name" value="lumazine-synth"/>
    <property type="match status" value="1"/>
</dbReference>
<dbReference type="PANTHER" id="PTHR21058:SF0">
    <property type="entry name" value="6,7-DIMETHYL-8-RIBITYLLUMAZINE SYNTHASE"/>
    <property type="match status" value="1"/>
</dbReference>
<dbReference type="PANTHER" id="PTHR21058">
    <property type="entry name" value="6,7-DIMETHYL-8-RIBITYLLUMAZINE SYNTHASE DMRL SYNTHASE LUMAZINE SYNTHASE"/>
    <property type="match status" value="1"/>
</dbReference>
<dbReference type="Pfam" id="PF00885">
    <property type="entry name" value="DMRL_synthase"/>
    <property type="match status" value="1"/>
</dbReference>
<dbReference type="SUPFAM" id="SSF52121">
    <property type="entry name" value="Lumazine synthase"/>
    <property type="match status" value="1"/>
</dbReference>
<name>RISB_TROWT</name>
<accession>Q83FM6</accession>
<comment type="function">
    <text evidence="1">Catalyzes the formation of 6,7-dimethyl-8-ribityllumazine by condensation of 5-amino-6-(D-ribitylamino)uracil with 3,4-dihydroxy-2-butanone 4-phosphate. This is the penultimate step in the biosynthesis of riboflavin.</text>
</comment>
<comment type="catalytic activity">
    <reaction evidence="1">
        <text>(2S)-2-hydroxy-3-oxobutyl phosphate + 5-amino-6-(D-ribitylamino)uracil = 6,7-dimethyl-8-(1-D-ribityl)lumazine + phosphate + 2 H2O + H(+)</text>
        <dbReference type="Rhea" id="RHEA:26152"/>
        <dbReference type="ChEBI" id="CHEBI:15377"/>
        <dbReference type="ChEBI" id="CHEBI:15378"/>
        <dbReference type="ChEBI" id="CHEBI:15934"/>
        <dbReference type="ChEBI" id="CHEBI:43474"/>
        <dbReference type="ChEBI" id="CHEBI:58201"/>
        <dbReference type="ChEBI" id="CHEBI:58830"/>
        <dbReference type="EC" id="2.5.1.78"/>
    </reaction>
</comment>
<comment type="pathway">
    <text evidence="1">Cofactor biosynthesis; riboflavin biosynthesis; riboflavin from 2-hydroxy-3-oxobutyl phosphate and 5-amino-6-(D-ribitylamino)uracil: step 1/2.</text>
</comment>
<comment type="similarity">
    <text evidence="1">Belongs to the DMRL synthase family.</text>
</comment>
<keyword id="KW-1185">Reference proteome</keyword>
<keyword id="KW-0686">Riboflavin biosynthesis</keyword>
<keyword id="KW-0808">Transferase</keyword>
<reference key="1">
    <citation type="journal article" date="2003" name="Genome Res.">
        <title>Tropheryma whipplei twist: a human pathogenic Actinobacteria with a reduced genome.</title>
        <authorList>
            <person name="Raoult D."/>
            <person name="Ogata H."/>
            <person name="Audic S."/>
            <person name="Robert C."/>
            <person name="Suhre K."/>
            <person name="Drancourt M."/>
            <person name="Claverie J.-M."/>
        </authorList>
    </citation>
    <scope>NUCLEOTIDE SEQUENCE [LARGE SCALE GENOMIC DNA]</scope>
    <source>
        <strain>Twist</strain>
    </source>
</reference>
<gene>
    <name evidence="1" type="primary">ribH</name>
    <name type="ordered locus">TWT_691</name>
</gene>
<feature type="chain" id="PRO_0000134825" description="6,7-dimethyl-8-ribityllumazine synthase">
    <location>
        <begin position="1"/>
        <end position="156"/>
    </location>
</feature>
<feature type="active site" description="Proton donor" evidence="1">
    <location>
        <position position="94"/>
    </location>
</feature>
<feature type="binding site" evidence="1">
    <location>
        <position position="33"/>
    </location>
    <ligand>
        <name>5-amino-6-(D-ribitylamino)uracil</name>
        <dbReference type="ChEBI" id="CHEBI:15934"/>
    </ligand>
</feature>
<feature type="binding site" evidence="1">
    <location>
        <begin position="64"/>
        <end position="66"/>
    </location>
    <ligand>
        <name>5-amino-6-(D-ribitylamino)uracil</name>
        <dbReference type="ChEBI" id="CHEBI:15934"/>
    </ligand>
</feature>
<feature type="binding site" evidence="1">
    <location>
        <begin position="86"/>
        <end position="88"/>
    </location>
    <ligand>
        <name>5-amino-6-(D-ribitylamino)uracil</name>
        <dbReference type="ChEBI" id="CHEBI:15934"/>
    </ligand>
</feature>
<feature type="binding site" evidence="1">
    <location>
        <begin position="91"/>
        <end position="92"/>
    </location>
    <ligand>
        <name>(2S)-2-hydroxy-3-oxobutyl phosphate</name>
        <dbReference type="ChEBI" id="CHEBI:58830"/>
    </ligand>
</feature>
<feature type="binding site" evidence="1">
    <location>
        <position position="119"/>
    </location>
    <ligand>
        <name>5-amino-6-(D-ribitylamino)uracil</name>
        <dbReference type="ChEBI" id="CHEBI:15934"/>
    </ligand>
</feature>
<feature type="binding site" evidence="1">
    <location>
        <position position="133"/>
    </location>
    <ligand>
        <name>(2S)-2-hydroxy-3-oxobutyl phosphate</name>
        <dbReference type="ChEBI" id="CHEBI:58830"/>
    </ligand>
</feature>
<evidence type="ECO:0000255" key="1">
    <source>
        <dbReference type="HAMAP-Rule" id="MF_00178"/>
    </source>
</evidence>
<sequence length="156" mass="16770">MGKDRNLSLNSPESIQSVIGDTDIKIAVIAAMWHEKIVRGLIDGATREIVSSGSHAELFRVPGSVELVLACKKLLKTFDAAVALGVILRGETDHNTHIARLVLSGITDVMLALEKPIGIGVLTIDTEQQGLDRSSGDYNAGVNAARAVIRMVRLFR</sequence>
<organism>
    <name type="scientific">Tropheryma whipplei (strain Twist)</name>
    <name type="common">Whipple's bacillus</name>
    <dbReference type="NCBI Taxonomy" id="203267"/>
    <lineage>
        <taxon>Bacteria</taxon>
        <taxon>Bacillati</taxon>
        <taxon>Actinomycetota</taxon>
        <taxon>Actinomycetes</taxon>
        <taxon>Micrococcales</taxon>
        <taxon>Tropherymataceae</taxon>
        <taxon>Tropheryma</taxon>
    </lineage>
</organism>
<proteinExistence type="inferred from homology"/>